<protein>
    <recommendedName>
        <fullName evidence="2">Rqc2 homolog RqcH</fullName>
        <shortName evidence="2">RqcH</shortName>
    </recommendedName>
    <alternativeName>
        <fullName evidence="4">Pneumonococcal adherence and virulence protein A</fullName>
    </alternativeName>
</protein>
<organism>
    <name type="scientific">Streptococcus pneumoniae serotype 2 (strain D39 / NCTC 7466)</name>
    <dbReference type="NCBI Taxonomy" id="373153"/>
    <lineage>
        <taxon>Bacteria</taxon>
        <taxon>Bacillati</taxon>
        <taxon>Bacillota</taxon>
        <taxon>Bacilli</taxon>
        <taxon>Lactobacillales</taxon>
        <taxon>Streptococcaceae</taxon>
        <taxon>Streptococcus</taxon>
    </lineage>
</organism>
<comment type="function">
    <text evidence="2">Key component of the ribosome quality control system (RQC), a ribosome-associated complex that mediates the extraction of incompletely synthesized nascent chains from stalled ribosomes and their subsequent degradation. RqcH recruits Ala-charged tRNA, and with RqcP directs the elongation of stalled nascent chains on 50S ribosomal subunits, leading to non-templated C-terminal alanine extensions (Ala tail). The Ala tail promotes nascent chain degradation. May add between 1 and at least 8 Ala residues. Binds to stalled 50S ribosomal subunits.</text>
</comment>
<comment type="function">
    <text evidence="1 3">Plays a significant role in virulence (PubMed:11580843). Recombinant protein binds to immobilized human fibronectin; binding is saturable and competed by heparin. Purified protein inhibits binding of whole cells to fibronectin (By similarity).</text>
</comment>
<comment type="subunit">
    <text evidence="1 2">Associates with stalled 50S ribosomal subunits, binds to RqcP (By similarity). Interacts with human fibronectin (By similarity).</text>
</comment>
<comment type="subcellular location">
    <subcellularLocation>
        <location evidence="3">Secreted</location>
        <location evidence="3">Capsule</location>
    </subcellularLocation>
    <subcellularLocation>
        <location evidence="1">Cell surface</location>
    </subcellularLocation>
    <subcellularLocation>
        <location evidence="1">Cytoplasm</location>
    </subcellularLocation>
    <text evidence="3">Found on the cell surface in the region of the capsule in capsulated bacteria (NCTC 10319 and R36A).</text>
</comment>
<comment type="disruption phenotype">
    <text evidence="3">About 50% reduction of binding to immobilized human fibronectin, greatly reduced mortality in mice (tested with encapsulated strain D39).</text>
</comment>
<comment type="similarity">
    <text evidence="2">Belongs to the NEMF family.</text>
</comment>
<name>RQCH_STRP2</name>
<accession>A0A0H2ZPC8</accession>
<evidence type="ECO:0000250" key="1">
    <source>
        <dbReference type="UniProtKB" id="Q8DQ36"/>
    </source>
</evidence>
<evidence type="ECO:0000255" key="2">
    <source>
        <dbReference type="HAMAP-Rule" id="MF_00844"/>
    </source>
</evidence>
<evidence type="ECO:0000269" key="3">
    <source>
    </source>
</evidence>
<evidence type="ECO:0000303" key="4">
    <source>
    </source>
</evidence>
<gene>
    <name evidence="2" type="primary">rqcH</name>
    <name evidence="4" type="synonym">pavA</name>
    <name type="ordered locus">SPD_0854</name>
</gene>
<feature type="chain" id="PRO_0000448046" description="Rqc2 homolog RqcH">
    <location>
        <begin position="1"/>
        <end position="551"/>
    </location>
</feature>
<reference key="1">
    <citation type="journal article" date="2007" name="J. Bacteriol.">
        <title>Genome sequence of Avery's virulent serotype 2 strain D39 of Streptococcus pneumoniae and comparison with that of unencapsulated laboratory strain R6.</title>
        <authorList>
            <person name="Lanie J.A."/>
            <person name="Ng W.-L."/>
            <person name="Kazmierczak K.M."/>
            <person name="Andrzejewski T.M."/>
            <person name="Davidsen T.M."/>
            <person name="Wayne K.J."/>
            <person name="Tettelin H."/>
            <person name="Glass J.I."/>
            <person name="Winkler M.E."/>
        </authorList>
    </citation>
    <scope>NUCLEOTIDE SEQUENCE [LARGE SCALE GENOMIC DNA]</scope>
    <source>
        <strain>D39 / NCTC 7466</strain>
    </source>
</reference>
<reference key="2">
    <citation type="journal article" date="2001" name="Mol. Microbiol.">
        <title>The pavA gene of Streptococcus pneumoniae encodes a fibronectin-binding protein that is essential for virulence.</title>
        <authorList>
            <person name="Holmes A.R."/>
            <person name="McNab R."/>
            <person name="Millsap K.W."/>
            <person name="Rohde M."/>
            <person name="Hammerschmidt S."/>
            <person name="Mawdsley J.L."/>
            <person name="Jenkinson H.F."/>
        </authorList>
    </citation>
    <scope>FUNCTION</scope>
    <scope>SUBCELLULAR LOCATION</scope>
    <scope>DISRUPTION PHENOTYPE</scope>
    <source>
        <strain>D39 / NCTC 7466</strain>
        <strain>NCTC 10319</strain>
        <strain>R36A</strain>
    </source>
</reference>
<keyword id="KW-0963">Cytoplasm</keyword>
<keyword id="KW-0648">Protein biosynthesis</keyword>
<keyword id="KW-1185">Reference proteome</keyword>
<keyword id="KW-0694">RNA-binding</keyword>
<keyword id="KW-0699">rRNA-binding</keyword>
<keyword id="KW-0964">Secreted</keyword>
<keyword id="KW-0820">tRNA-binding</keyword>
<keyword id="KW-0843">Virulence</keyword>
<dbReference type="EMBL" id="CP000410">
    <property type="protein sequence ID" value="ABJ54581.1"/>
    <property type="molecule type" value="Genomic_DNA"/>
</dbReference>
<dbReference type="RefSeq" id="WP_000006705.1">
    <property type="nucleotide sequence ID" value="NZ_JAMLJR010000004.1"/>
</dbReference>
<dbReference type="SMR" id="A0A0H2ZPC8"/>
<dbReference type="PaxDb" id="373153-SPD_0854"/>
<dbReference type="KEGG" id="spd:SPD_0854"/>
<dbReference type="eggNOG" id="COG1293">
    <property type="taxonomic scope" value="Bacteria"/>
</dbReference>
<dbReference type="HOGENOM" id="CLU_022481_2_1_9"/>
<dbReference type="Proteomes" id="UP000001452">
    <property type="component" value="Chromosome"/>
</dbReference>
<dbReference type="GO" id="GO:0042603">
    <property type="term" value="C:capsule"/>
    <property type="evidence" value="ECO:0007669"/>
    <property type="project" value="UniProtKB-SubCell"/>
</dbReference>
<dbReference type="GO" id="GO:0009986">
    <property type="term" value="C:cell surface"/>
    <property type="evidence" value="ECO:0007669"/>
    <property type="project" value="UniProtKB-SubCell"/>
</dbReference>
<dbReference type="GO" id="GO:0005737">
    <property type="term" value="C:cytoplasm"/>
    <property type="evidence" value="ECO:0007669"/>
    <property type="project" value="UniProtKB-SubCell"/>
</dbReference>
<dbReference type="GO" id="GO:0005576">
    <property type="term" value="C:extracellular region"/>
    <property type="evidence" value="ECO:0007669"/>
    <property type="project" value="UniProtKB-KW"/>
</dbReference>
<dbReference type="GO" id="GO:1990112">
    <property type="term" value="C:RQC complex"/>
    <property type="evidence" value="ECO:0007669"/>
    <property type="project" value="TreeGrafter"/>
</dbReference>
<dbReference type="GO" id="GO:0043023">
    <property type="term" value="F:ribosomal large subunit binding"/>
    <property type="evidence" value="ECO:0007669"/>
    <property type="project" value="UniProtKB-UniRule"/>
</dbReference>
<dbReference type="GO" id="GO:0019843">
    <property type="term" value="F:rRNA binding"/>
    <property type="evidence" value="ECO:0007669"/>
    <property type="project" value="UniProtKB-UniRule"/>
</dbReference>
<dbReference type="GO" id="GO:0000049">
    <property type="term" value="F:tRNA binding"/>
    <property type="evidence" value="ECO:0007669"/>
    <property type="project" value="UniProtKB-UniRule"/>
</dbReference>
<dbReference type="GO" id="GO:0072344">
    <property type="term" value="P:rescue of stalled ribosome"/>
    <property type="evidence" value="ECO:0007669"/>
    <property type="project" value="UniProtKB-UniRule"/>
</dbReference>
<dbReference type="FunFam" id="2.30.310.10:FF:000004">
    <property type="entry name" value="Fibronectin-binding protein A"/>
    <property type="match status" value="1"/>
</dbReference>
<dbReference type="Gene3D" id="3.40.970.40">
    <property type="entry name" value="fibrinogen binding protein from staphylococcus aureus domain like"/>
    <property type="match status" value="1"/>
</dbReference>
<dbReference type="Gene3D" id="2.30.310.10">
    <property type="entry name" value="ibrinogen binding protein from staphylococcus aureus domain"/>
    <property type="match status" value="1"/>
</dbReference>
<dbReference type="HAMAP" id="MF_00844_B">
    <property type="entry name" value="RqcH_B"/>
    <property type="match status" value="1"/>
</dbReference>
<dbReference type="InterPro" id="IPR008532">
    <property type="entry name" value="NFACT_RNA-bd"/>
</dbReference>
<dbReference type="InterPro" id="IPR051608">
    <property type="entry name" value="RQC_Subunit_NEMF"/>
</dbReference>
<dbReference type="InterPro" id="IPR043682">
    <property type="entry name" value="RqcH_bacterial"/>
</dbReference>
<dbReference type="PANTHER" id="PTHR15239">
    <property type="entry name" value="NUCLEAR EXPORT MEDIATOR FACTOR NEMF"/>
    <property type="match status" value="1"/>
</dbReference>
<dbReference type="PANTHER" id="PTHR15239:SF6">
    <property type="entry name" value="RIBOSOME QUALITY CONTROL COMPLEX SUBUNIT NEMF"/>
    <property type="match status" value="1"/>
</dbReference>
<dbReference type="Pfam" id="PF05670">
    <property type="entry name" value="NFACT-R_1"/>
    <property type="match status" value="1"/>
</dbReference>
<dbReference type="Pfam" id="PF05833">
    <property type="entry name" value="NFACT_N"/>
    <property type="match status" value="1"/>
</dbReference>
<sequence length="551" mass="63280">MSFDGFFLHHIVEELRSELVNGRIQKINQPFEQELVLQIRSNRQSHRLLLSAHPVFGRIQLTQTTFENPAQPSTFIMVLRKYLQGALIESIEQVENDRIVEMTVSNKNEIGDHIQATLIIEIMGKHSNILLVDKSSHKILEVIKHVGFSQNSYRTLLPGSTYIAPPSTESLNPFTIKDEKLFEILQTQELTAKNLQSLFQGLGRDTANELERILVSEKLSAFRNFFNQETKPCLTETSFSPVPFANQAGEPFANLSDLLDTYYKNKAERDRVKQQASELIRRVENELQKNRHKLKKQEKELLATDNAEEFRQKGELLTTFLHQVPNDQDQVILDNYYTNQPIMIALDKALTPNQNAQRYFKRYQKLKEAVKYLTDLIEETKATILYLESVETVLNQAGLEEIAEIREELIQTGFIRRRQREKIQKRKKLEQYLASDGKTIIYVGRNNLQNEELTFKMARKEELWFHAKDIPGSHVVISGNLDPSDAVKTDAAELAAYFSQGRLSNLVQVDMIEVKKLNKPTGGKPGFVTYTGQKTLRVTPDSKKIASMKKS</sequence>
<proteinExistence type="inferred from homology"/>